<name>MORF7_ARATH</name>
<keyword id="KW-0025">Alternative splicing</keyword>
<keyword id="KW-0496">Mitochondrion</keyword>
<keyword id="KW-0507">mRNA processing</keyword>
<keyword id="KW-1185">Reference proteome</keyword>
<keyword id="KW-0809">Transit peptide</keyword>
<accession>Q9CAH0</accession>
<gene>
    <name evidence="5" type="primary">MORF7</name>
    <name evidence="6" type="synonym">RIP7</name>
    <name evidence="8" type="ordered locus">At1g72530</name>
    <name evidence="9" type="ORF">F28P22.28</name>
</gene>
<sequence length="188" mass="21623">MARIIRRPLNLTAAVRFRLSPLSPFSGNSGSINSETTSWSELIRVPSLVEGCDYKHWLVLMKPPNGYPTRNHIVQSFVETLAMALGSEEEAKRSIYSVSTKYYYAFGCRIHEPLTYKIRSLPDVKWVLPDSFIVDGDNRYGGEPFVDGEVVPYDEKYHADWLRDQTDEDAKSGVVKKKHRRKRKKKLI</sequence>
<organism>
    <name type="scientific">Arabidopsis thaliana</name>
    <name type="common">Mouse-ear cress</name>
    <dbReference type="NCBI Taxonomy" id="3702"/>
    <lineage>
        <taxon>Eukaryota</taxon>
        <taxon>Viridiplantae</taxon>
        <taxon>Streptophyta</taxon>
        <taxon>Embryophyta</taxon>
        <taxon>Tracheophyta</taxon>
        <taxon>Spermatophyta</taxon>
        <taxon>Magnoliopsida</taxon>
        <taxon>eudicotyledons</taxon>
        <taxon>Gunneridae</taxon>
        <taxon>Pentapetalae</taxon>
        <taxon>rosids</taxon>
        <taxon>malvids</taxon>
        <taxon>Brassicales</taxon>
        <taxon>Brassicaceae</taxon>
        <taxon>Camelineae</taxon>
        <taxon>Arabidopsis</taxon>
    </lineage>
</organism>
<proteinExistence type="evidence at protein level"/>
<dbReference type="EMBL" id="AC010926">
    <property type="protein sequence ID" value="AAG51843.1"/>
    <property type="molecule type" value="Genomic_DNA"/>
</dbReference>
<dbReference type="EMBL" id="CP002684">
    <property type="protein sequence ID" value="AEE35335.1"/>
    <property type="molecule type" value="Genomic_DNA"/>
</dbReference>
<dbReference type="EMBL" id="BT030079">
    <property type="protein sequence ID" value="ABN04817.1"/>
    <property type="molecule type" value="mRNA"/>
</dbReference>
<dbReference type="PIR" id="F96749">
    <property type="entry name" value="F96749"/>
</dbReference>
<dbReference type="RefSeq" id="NP_177397.1">
    <molecule id="Q9CAH0-1"/>
    <property type="nucleotide sequence ID" value="NM_105912.2"/>
</dbReference>
<dbReference type="SMR" id="Q9CAH0"/>
<dbReference type="FunCoup" id="Q9CAH0">
    <property type="interactions" value="41"/>
</dbReference>
<dbReference type="STRING" id="3702.Q9CAH0"/>
<dbReference type="PaxDb" id="3702-AT1G72530.2"/>
<dbReference type="DNASU" id="843585"/>
<dbReference type="EnsemblPlants" id="AT1G72530.1">
    <molecule id="Q9CAH0-1"/>
    <property type="protein sequence ID" value="AT1G72530.1"/>
    <property type="gene ID" value="AT1G72530"/>
</dbReference>
<dbReference type="GeneID" id="843585"/>
<dbReference type="Gramene" id="AT1G72530.1">
    <molecule id="Q9CAH0-1"/>
    <property type="protein sequence ID" value="AT1G72530.1"/>
    <property type="gene ID" value="AT1G72530"/>
</dbReference>
<dbReference type="KEGG" id="ath:AT1G72530"/>
<dbReference type="Araport" id="AT1G72530"/>
<dbReference type="TAIR" id="AT1G72530">
    <property type="gene designation" value="RIP7"/>
</dbReference>
<dbReference type="eggNOG" id="ENOG502S1UF">
    <property type="taxonomic scope" value="Eukaryota"/>
</dbReference>
<dbReference type="InParanoid" id="Q9CAH0"/>
<dbReference type="OrthoDB" id="1913091at2759"/>
<dbReference type="PhylomeDB" id="Q9CAH0"/>
<dbReference type="PRO" id="PR:Q9CAH0"/>
<dbReference type="Proteomes" id="UP000006548">
    <property type="component" value="Chromosome 1"/>
</dbReference>
<dbReference type="ExpressionAtlas" id="Q9CAH0">
    <property type="expression patterns" value="baseline and differential"/>
</dbReference>
<dbReference type="GO" id="GO:0005739">
    <property type="term" value="C:mitochondrion"/>
    <property type="evidence" value="ECO:0007669"/>
    <property type="project" value="UniProtKB-SubCell"/>
</dbReference>
<dbReference type="GO" id="GO:0016554">
    <property type="term" value="P:cytidine to uridine editing"/>
    <property type="evidence" value="ECO:0007669"/>
    <property type="project" value="InterPro"/>
</dbReference>
<dbReference type="GO" id="GO:0080156">
    <property type="term" value="P:mitochondrial mRNA modification"/>
    <property type="evidence" value="ECO:0000315"/>
    <property type="project" value="UniProtKB"/>
</dbReference>
<dbReference type="GO" id="GO:0006397">
    <property type="term" value="P:mRNA processing"/>
    <property type="evidence" value="ECO:0007669"/>
    <property type="project" value="UniProtKB-KW"/>
</dbReference>
<dbReference type="InterPro" id="IPR039206">
    <property type="entry name" value="MORF/ORRM1/DAG-like"/>
</dbReference>
<dbReference type="InterPro" id="IPR054059">
    <property type="entry name" value="MORF/ORRM1/DAG-like_MORF"/>
</dbReference>
<dbReference type="PANTHER" id="PTHR31346">
    <property type="entry name" value="MULTIPLE ORGANELLAR RNA EDITING FACTOR 2, CHLOROPLASTIC-RELATED-RELATED"/>
    <property type="match status" value="1"/>
</dbReference>
<dbReference type="PANTHER" id="PTHR31346:SF12">
    <property type="entry name" value="MULTIPLE ORGANELLAR RNA EDITING FACTOR 7, MITOCHONDRIAL"/>
    <property type="match status" value="1"/>
</dbReference>
<dbReference type="Pfam" id="PF21864">
    <property type="entry name" value="MORF_dom"/>
    <property type="match status" value="1"/>
</dbReference>
<protein>
    <recommendedName>
        <fullName evidence="7">Multiple organellar RNA editing factor 7, mitochondrial</fullName>
    </recommendedName>
    <alternativeName>
        <fullName evidence="6">RNA editing-interacting protein 7</fullName>
    </alternativeName>
</protein>
<reference key="1">
    <citation type="journal article" date="2000" name="Nature">
        <title>Sequence and analysis of chromosome 1 of the plant Arabidopsis thaliana.</title>
        <authorList>
            <person name="Theologis A."/>
            <person name="Ecker J.R."/>
            <person name="Palm C.J."/>
            <person name="Federspiel N.A."/>
            <person name="Kaul S."/>
            <person name="White O."/>
            <person name="Alonso J."/>
            <person name="Altafi H."/>
            <person name="Araujo R."/>
            <person name="Bowman C.L."/>
            <person name="Brooks S.Y."/>
            <person name="Buehler E."/>
            <person name="Chan A."/>
            <person name="Chao Q."/>
            <person name="Chen H."/>
            <person name="Cheuk R.F."/>
            <person name="Chin C.W."/>
            <person name="Chung M.K."/>
            <person name="Conn L."/>
            <person name="Conway A.B."/>
            <person name="Conway A.R."/>
            <person name="Creasy T.H."/>
            <person name="Dewar K."/>
            <person name="Dunn P."/>
            <person name="Etgu P."/>
            <person name="Feldblyum T.V."/>
            <person name="Feng J.-D."/>
            <person name="Fong B."/>
            <person name="Fujii C.Y."/>
            <person name="Gill J.E."/>
            <person name="Goldsmith A.D."/>
            <person name="Haas B."/>
            <person name="Hansen N.F."/>
            <person name="Hughes B."/>
            <person name="Huizar L."/>
            <person name="Hunter J.L."/>
            <person name="Jenkins J."/>
            <person name="Johnson-Hopson C."/>
            <person name="Khan S."/>
            <person name="Khaykin E."/>
            <person name="Kim C.J."/>
            <person name="Koo H.L."/>
            <person name="Kremenetskaia I."/>
            <person name="Kurtz D.B."/>
            <person name="Kwan A."/>
            <person name="Lam B."/>
            <person name="Langin-Hooper S."/>
            <person name="Lee A."/>
            <person name="Lee J.M."/>
            <person name="Lenz C.A."/>
            <person name="Li J.H."/>
            <person name="Li Y.-P."/>
            <person name="Lin X."/>
            <person name="Liu S.X."/>
            <person name="Liu Z.A."/>
            <person name="Luros J.S."/>
            <person name="Maiti R."/>
            <person name="Marziali A."/>
            <person name="Militscher J."/>
            <person name="Miranda M."/>
            <person name="Nguyen M."/>
            <person name="Nierman W.C."/>
            <person name="Osborne B.I."/>
            <person name="Pai G."/>
            <person name="Peterson J."/>
            <person name="Pham P.K."/>
            <person name="Rizzo M."/>
            <person name="Rooney T."/>
            <person name="Rowley D."/>
            <person name="Sakano H."/>
            <person name="Salzberg S.L."/>
            <person name="Schwartz J.R."/>
            <person name="Shinn P."/>
            <person name="Southwick A.M."/>
            <person name="Sun H."/>
            <person name="Tallon L.J."/>
            <person name="Tambunga G."/>
            <person name="Toriumi M.J."/>
            <person name="Town C.D."/>
            <person name="Utterback T."/>
            <person name="Van Aken S."/>
            <person name="Vaysberg M."/>
            <person name="Vysotskaia V.S."/>
            <person name="Walker M."/>
            <person name="Wu D."/>
            <person name="Yu G."/>
            <person name="Fraser C.M."/>
            <person name="Venter J.C."/>
            <person name="Davis R.W."/>
        </authorList>
    </citation>
    <scope>NUCLEOTIDE SEQUENCE [LARGE SCALE GENOMIC DNA]</scope>
    <source>
        <strain>cv. Columbia</strain>
    </source>
</reference>
<reference key="2">
    <citation type="journal article" date="2017" name="Plant J.">
        <title>Araport11: a complete reannotation of the Arabidopsis thaliana reference genome.</title>
        <authorList>
            <person name="Cheng C.Y."/>
            <person name="Krishnakumar V."/>
            <person name="Chan A.P."/>
            <person name="Thibaud-Nissen F."/>
            <person name="Schobel S."/>
            <person name="Town C.D."/>
        </authorList>
    </citation>
    <scope>GENOME REANNOTATION</scope>
    <source>
        <strain>cv. Columbia</strain>
    </source>
</reference>
<reference key="3">
    <citation type="submission" date="2007-01" db="EMBL/GenBank/DDBJ databases">
        <title>Arabidopsis ORF clones.</title>
        <authorList>
            <person name="Kim C.J."/>
            <person name="Bautista V.R."/>
            <person name="Chen H."/>
            <person name="De Los Reyes C."/>
            <person name="Wu S.Y."/>
            <person name="Ecker J.R."/>
        </authorList>
    </citation>
    <scope>NUCLEOTIDE SEQUENCE [LARGE SCALE MRNA]</scope>
    <source>
        <strain>cv. Columbia</strain>
    </source>
</reference>
<reference key="4">
    <citation type="journal article" date="2012" name="Proc. Natl. Acad. Sci. U.S.A.">
        <title>Multiple organellar RNA editing factor (MORF) family proteins are required for RNA editing in mitochondria and plastids of plants.</title>
        <authorList>
            <person name="Takenaka M."/>
            <person name="Zehrmann A."/>
            <person name="Verbitskiy D."/>
            <person name="Kugelmann M."/>
            <person name="Hartel B."/>
            <person name="Brennicke A."/>
        </authorList>
    </citation>
    <scope>GENE FAMILY</scope>
    <scope>NOMENCLATURE</scope>
</reference>
<reference key="5">
    <citation type="journal article" date="2013" name="PLoS Genet.">
        <title>Comprehensive high-resolution analysis of the role of an Arabidopsis gene family in RNA editing.</title>
        <authorList>
            <person name="Bentolila S."/>
            <person name="Oh J."/>
            <person name="Hanson M.R."/>
            <person name="Bukowski R."/>
        </authorList>
    </citation>
    <scope>FUNCTION</scope>
    <scope>GENE FAMILY</scope>
</reference>
<reference key="6">
    <citation type="journal article" date="2015" name="J. Biol. Chem.">
        <title>Selective homo- and heteromer interactions between the multiple organellar RNA editing factor (MORF) proteins in Arabidopsis thaliana.</title>
        <authorList>
            <person name="Zehrmann A."/>
            <person name="Haertel B."/>
            <person name="Glass F."/>
            <person name="Bayer-Csaszar E."/>
            <person name="Obata T."/>
            <person name="Meyer E."/>
            <person name="Brennicke A."/>
            <person name="Takenaka M."/>
        </authorList>
    </citation>
    <scope>INTERACTION WITH MORF8/RIP1; MORF5/RIP5 AND MORF6/RIP6</scope>
    <scope>SUBCELLULAR LOCATION</scope>
</reference>
<feature type="transit peptide" description="Mitochondrion" evidence="1">
    <location>
        <begin position="1"/>
        <end position="20"/>
    </location>
</feature>
<feature type="chain" id="PRO_0000432530" description="Multiple organellar RNA editing factor 7, mitochondrial" evidence="1">
    <location>
        <begin position="21"/>
        <end position="188"/>
    </location>
</feature>
<feature type="region of interest" description="Disordered" evidence="2">
    <location>
        <begin position="169"/>
        <end position="188"/>
    </location>
</feature>
<feature type="compositionally biased region" description="Basic residues" evidence="2">
    <location>
        <begin position="174"/>
        <end position="188"/>
    </location>
</feature>
<comment type="function">
    <text evidence="3">Involved in organellar RNA editing. Required for the processing of few RNA editing sites in mitochondria.</text>
</comment>
<comment type="subunit">
    <text evidence="4">Heterodimers with MORF8/RIP1, MORF5/RIP5 and MORF6/RIP6.</text>
</comment>
<comment type="subcellular location">
    <subcellularLocation>
        <location evidence="4">Mitochondrion</location>
    </subcellularLocation>
</comment>
<comment type="alternative products">
    <event type="alternative splicing"/>
    <isoform>
        <id>Q9CAH0-1</id>
        <name>1</name>
        <sequence type="displayed"/>
    </isoform>
    <text evidence="7">A number of isoforms are produced. According to EST sequences.</text>
</comment>
<comment type="similarity">
    <text>Belongs to the MORF family.</text>
</comment>
<evidence type="ECO:0000255" key="1"/>
<evidence type="ECO:0000256" key="2">
    <source>
        <dbReference type="SAM" id="MobiDB-lite"/>
    </source>
</evidence>
<evidence type="ECO:0000269" key="3">
    <source>
    </source>
</evidence>
<evidence type="ECO:0000269" key="4">
    <source>
    </source>
</evidence>
<evidence type="ECO:0000303" key="5">
    <source>
    </source>
</evidence>
<evidence type="ECO:0000303" key="6">
    <source>
    </source>
</evidence>
<evidence type="ECO:0000305" key="7"/>
<evidence type="ECO:0000312" key="8">
    <source>
        <dbReference type="Araport" id="AT1G72530"/>
    </source>
</evidence>
<evidence type="ECO:0000312" key="9">
    <source>
        <dbReference type="EMBL" id="AAG51843.1"/>
    </source>
</evidence>